<comment type="function">
    <text evidence="1">Plays an important role in the process of myofiber differentiation and maturation. Probable substrate-recognition component of a SCF-like ECS (Elongin BC-CUL2/5-SOCS-box protein) E3 ubiquitin-protein ligase complex, which mediates the ubiquitination of proteins. Probably contributes to catalysis through recognition and positioning of the substrate and the ubiquitin-conjugating enzyme. During myogenesis, controls the ubiquitination and degradation of the specific pool of CTNNB1/beta-catenin located at the sarcolemma (By similarity).</text>
</comment>
<comment type="pathway">
    <text>Protein modification; protein ubiquitination.</text>
</comment>
<comment type="subunit">
    <text evidence="1">Probable component the ECS(NEURL2) E3 ubiquitin-protein ligase complex consisting of ELOB/Elongin B, ELOC/Elongin C, CUL5, RBX1 and NEURL2. Interacts with CTNNB1 (By similarity).</text>
</comment>
<comment type="subcellular location">
    <subcellularLocation>
        <location evidence="1">Cytoplasm</location>
    </subcellularLocation>
</comment>
<comment type="tissue specificity">
    <text evidence="5">Expressed specifically in skeletal and cardiac muscles.</text>
</comment>
<comment type="domain">
    <text evidence="1">The SOCS domain mediates the interaction with ELOB and ELOC, while the NHR domain may be involved in ubiquitination substrate binding.</text>
</comment>
<dbReference type="EMBL" id="AK054821">
    <property type="protein sequence ID" value="BAB70810.1"/>
    <property type="molecule type" value="mRNA"/>
</dbReference>
<dbReference type="EMBL" id="AJ295985">
    <property type="protein sequence ID" value="CAC82498.1"/>
    <property type="molecule type" value="mRNA"/>
</dbReference>
<dbReference type="EMBL" id="AL008726">
    <property type="status" value="NOT_ANNOTATED_CDS"/>
    <property type="molecule type" value="Genomic_DNA"/>
</dbReference>
<dbReference type="EMBL" id="BC074737">
    <property type="protein sequence ID" value="AAH74737.1"/>
    <property type="molecule type" value="mRNA"/>
</dbReference>
<dbReference type="EMBL" id="BC105935">
    <property type="protein sequence ID" value="AAI05936.1"/>
    <property type="molecule type" value="mRNA"/>
</dbReference>
<dbReference type="EMBL" id="BC107485">
    <property type="protein sequence ID" value="AAI07486.1"/>
    <property type="molecule type" value="mRNA"/>
</dbReference>
<dbReference type="CCDS" id="CCDS13384.1"/>
<dbReference type="RefSeq" id="NP_001265464.1">
    <property type="nucleotide sequence ID" value="NM_001278535.1"/>
</dbReference>
<dbReference type="RefSeq" id="NP_542787.1">
    <property type="nucleotide sequence ID" value="NM_080749.4"/>
</dbReference>
<dbReference type="SMR" id="Q9BR09"/>
<dbReference type="BioGRID" id="126719">
    <property type="interactions" value="9"/>
</dbReference>
<dbReference type="FunCoup" id="Q9BR09">
    <property type="interactions" value="690"/>
</dbReference>
<dbReference type="STRING" id="9606.ENSP00000361596"/>
<dbReference type="BioMuta" id="NEURL2"/>
<dbReference type="DMDM" id="33301415"/>
<dbReference type="PaxDb" id="9606-ENSP00000361596"/>
<dbReference type="PeptideAtlas" id="Q9BR09"/>
<dbReference type="ProteomicsDB" id="78735"/>
<dbReference type="Antibodypedia" id="27828">
    <property type="antibodies" value="84 antibodies from 24 providers"/>
</dbReference>
<dbReference type="DNASU" id="140825"/>
<dbReference type="Ensembl" id="ENST00000372518.5">
    <property type="protein sequence ID" value="ENSP00000361596.4"/>
    <property type="gene ID" value="ENSG00000124257.7"/>
</dbReference>
<dbReference type="GeneID" id="140825"/>
<dbReference type="KEGG" id="hsa:140825"/>
<dbReference type="MANE-Select" id="ENST00000372518.5">
    <property type="protein sequence ID" value="ENSP00000361596.4"/>
    <property type="RefSeq nucleotide sequence ID" value="NM_080749.4"/>
    <property type="RefSeq protein sequence ID" value="NP_542787.1"/>
</dbReference>
<dbReference type="UCSC" id="uc002xqg.3">
    <property type="organism name" value="human"/>
</dbReference>
<dbReference type="AGR" id="HGNC:16156"/>
<dbReference type="CTD" id="140825"/>
<dbReference type="DisGeNET" id="140825"/>
<dbReference type="GeneCards" id="NEURL2"/>
<dbReference type="HGNC" id="HGNC:16156">
    <property type="gene designation" value="NEURL2"/>
</dbReference>
<dbReference type="HPA" id="ENSG00000124257">
    <property type="expression patterns" value="Tissue enhanced (kidney)"/>
</dbReference>
<dbReference type="MalaCards" id="NEURL2"/>
<dbReference type="MIM" id="608597">
    <property type="type" value="gene"/>
</dbReference>
<dbReference type="neXtProt" id="NX_Q9BR09"/>
<dbReference type="OpenTargets" id="ENSG00000124257"/>
<dbReference type="PharmGKB" id="PA25705"/>
<dbReference type="VEuPathDB" id="HostDB:ENSG00000124257"/>
<dbReference type="eggNOG" id="KOG4625">
    <property type="taxonomic scope" value="Eukaryota"/>
</dbReference>
<dbReference type="GeneTree" id="ENSGT00940000159689"/>
<dbReference type="HOGENOM" id="CLU_091737_1_0_1"/>
<dbReference type="InParanoid" id="Q9BR09"/>
<dbReference type="OMA" id="RIGIIYV"/>
<dbReference type="OrthoDB" id="10059069at2759"/>
<dbReference type="PAN-GO" id="Q9BR09">
    <property type="GO annotations" value="1 GO annotation based on evolutionary models"/>
</dbReference>
<dbReference type="PhylomeDB" id="Q9BR09"/>
<dbReference type="TreeFam" id="TF314368"/>
<dbReference type="PathwayCommons" id="Q9BR09"/>
<dbReference type="Reactome" id="R-HSA-8951664">
    <property type="pathway name" value="Neddylation"/>
</dbReference>
<dbReference type="SignaLink" id="Q9BR09"/>
<dbReference type="UniPathway" id="UPA00143"/>
<dbReference type="BioGRID-ORCS" id="140825">
    <property type="hits" value="12 hits in 1148 CRISPR screens"/>
</dbReference>
<dbReference type="GeneWiki" id="NEURL2"/>
<dbReference type="GenomeRNAi" id="140825"/>
<dbReference type="Pharos" id="Q9BR09">
    <property type="development level" value="Tbio"/>
</dbReference>
<dbReference type="PRO" id="PR:Q9BR09"/>
<dbReference type="Proteomes" id="UP000005640">
    <property type="component" value="Chromosome 20"/>
</dbReference>
<dbReference type="RNAct" id="Q9BR09">
    <property type="molecule type" value="protein"/>
</dbReference>
<dbReference type="Bgee" id="ENSG00000124257">
    <property type="expression patterns" value="Expressed in male germ line stem cell (sensu Vertebrata) in testis and 123 other cell types or tissues"/>
</dbReference>
<dbReference type="ExpressionAtlas" id="Q9BR09">
    <property type="expression patterns" value="baseline and differential"/>
</dbReference>
<dbReference type="GO" id="GO:0005829">
    <property type="term" value="C:cytosol"/>
    <property type="evidence" value="ECO:0000304"/>
    <property type="project" value="Reactome"/>
</dbReference>
<dbReference type="GO" id="GO:0061630">
    <property type="term" value="F:ubiquitin protein ligase activity"/>
    <property type="evidence" value="ECO:0000318"/>
    <property type="project" value="GO_Central"/>
</dbReference>
<dbReference type="GO" id="GO:0035556">
    <property type="term" value="P:intracellular signal transduction"/>
    <property type="evidence" value="ECO:0007669"/>
    <property type="project" value="InterPro"/>
</dbReference>
<dbReference type="GO" id="GO:0016567">
    <property type="term" value="P:protein ubiquitination"/>
    <property type="evidence" value="ECO:0007669"/>
    <property type="project" value="UniProtKB-UniPathway"/>
</dbReference>
<dbReference type="CDD" id="cd12887">
    <property type="entry name" value="SPRY_NHR_like"/>
    <property type="match status" value="1"/>
</dbReference>
<dbReference type="FunFam" id="1.10.750.20:FF:000006">
    <property type="entry name" value="neuralized-like protein 2 isoform X1"/>
    <property type="match status" value="1"/>
</dbReference>
<dbReference type="Gene3D" id="2.60.120.920">
    <property type="match status" value="1"/>
</dbReference>
<dbReference type="Gene3D" id="1.10.750.20">
    <property type="entry name" value="SOCS box"/>
    <property type="match status" value="1"/>
</dbReference>
<dbReference type="InterPro" id="IPR043136">
    <property type="entry name" value="B30.2/SPRY_sf"/>
</dbReference>
<dbReference type="InterPro" id="IPR037962">
    <property type="entry name" value="Neuralized"/>
</dbReference>
<dbReference type="InterPro" id="IPR006573">
    <property type="entry name" value="NHR_dom"/>
</dbReference>
<dbReference type="InterPro" id="IPR001496">
    <property type="entry name" value="SOCS_box"/>
</dbReference>
<dbReference type="InterPro" id="IPR036036">
    <property type="entry name" value="SOCS_box-like_dom_sf"/>
</dbReference>
<dbReference type="PANTHER" id="PTHR12429">
    <property type="entry name" value="NEURALIZED"/>
    <property type="match status" value="1"/>
</dbReference>
<dbReference type="PANTHER" id="PTHR12429:SF8">
    <property type="entry name" value="NEURALIZED-LIKE PROTEIN 2"/>
    <property type="match status" value="1"/>
</dbReference>
<dbReference type="Pfam" id="PF07177">
    <property type="entry name" value="Neuralized"/>
    <property type="match status" value="1"/>
</dbReference>
<dbReference type="Pfam" id="PF07525">
    <property type="entry name" value="SOCS_box"/>
    <property type="match status" value="1"/>
</dbReference>
<dbReference type="SMART" id="SM00588">
    <property type="entry name" value="NEUZ"/>
    <property type="match status" value="1"/>
</dbReference>
<dbReference type="SMART" id="SM00969">
    <property type="entry name" value="SOCS_box"/>
    <property type="match status" value="1"/>
</dbReference>
<dbReference type="SUPFAM" id="SSF158235">
    <property type="entry name" value="SOCS box-like"/>
    <property type="match status" value="1"/>
</dbReference>
<dbReference type="PROSITE" id="PS51065">
    <property type="entry name" value="NHR"/>
    <property type="match status" value="1"/>
</dbReference>
<dbReference type="PROSITE" id="PS50225">
    <property type="entry name" value="SOCS"/>
    <property type="match status" value="1"/>
</dbReference>
<organism>
    <name type="scientific">Homo sapiens</name>
    <name type="common">Human</name>
    <dbReference type="NCBI Taxonomy" id="9606"/>
    <lineage>
        <taxon>Eukaryota</taxon>
        <taxon>Metazoa</taxon>
        <taxon>Chordata</taxon>
        <taxon>Craniata</taxon>
        <taxon>Vertebrata</taxon>
        <taxon>Euteleostomi</taxon>
        <taxon>Mammalia</taxon>
        <taxon>Eutheria</taxon>
        <taxon>Euarchontoglires</taxon>
        <taxon>Primates</taxon>
        <taxon>Haplorrhini</taxon>
        <taxon>Catarrhini</taxon>
        <taxon>Hominidae</taxon>
        <taxon>Homo</taxon>
    </lineage>
</organism>
<gene>
    <name type="primary">NEURL2</name>
    <name type="synonym">C20orf163</name>
</gene>
<sequence length="285" mass="31690">MAAASEPVDSGALWGLERPEPPPTRFHRVHGANIRVDPSGTRATRVESFAHGVCFSREPLAPGQVFLVEIEEKELGWCGHLRLGLTALDPASLAPVPEFSLPDLVNLGHTWVFAITRHHNRVPREGRPEAEAAAPSRPPTLLVEPYLRIEQFRIPRDRLVGRSRPGLYSHLLDQLYELNVLPPTARRSRLGVLFCPRPDGTADMHIIINGEDMGPSARGLPAAQPLYAVVDVFASTKSVRLVQLEYGLPSLQTLCRLVIQRSMVHRLAIDGLHLPKELKDFCKYE</sequence>
<evidence type="ECO:0000250" key="1"/>
<evidence type="ECO:0000255" key="2">
    <source>
        <dbReference type="PROSITE-ProRule" id="PRU00194"/>
    </source>
</evidence>
<evidence type="ECO:0000255" key="3">
    <source>
        <dbReference type="PROSITE-ProRule" id="PRU00400"/>
    </source>
</evidence>
<evidence type="ECO:0000256" key="4">
    <source>
        <dbReference type="SAM" id="MobiDB-lite"/>
    </source>
</evidence>
<evidence type="ECO:0000269" key="5">
    <source>
    </source>
</evidence>
<reference key="1">
    <citation type="journal article" date="2004" name="Nat. Genet.">
        <title>Complete sequencing and characterization of 21,243 full-length human cDNAs.</title>
        <authorList>
            <person name="Ota T."/>
            <person name="Suzuki Y."/>
            <person name="Nishikawa T."/>
            <person name="Otsuki T."/>
            <person name="Sugiyama T."/>
            <person name="Irie R."/>
            <person name="Wakamatsu A."/>
            <person name="Hayashi K."/>
            <person name="Sato H."/>
            <person name="Nagai K."/>
            <person name="Kimura K."/>
            <person name="Makita H."/>
            <person name="Sekine M."/>
            <person name="Obayashi M."/>
            <person name="Nishi T."/>
            <person name="Shibahara T."/>
            <person name="Tanaka T."/>
            <person name="Ishii S."/>
            <person name="Yamamoto J."/>
            <person name="Saito K."/>
            <person name="Kawai Y."/>
            <person name="Isono Y."/>
            <person name="Nakamura Y."/>
            <person name="Nagahari K."/>
            <person name="Murakami K."/>
            <person name="Yasuda T."/>
            <person name="Iwayanagi T."/>
            <person name="Wagatsuma M."/>
            <person name="Shiratori A."/>
            <person name="Sudo H."/>
            <person name="Hosoiri T."/>
            <person name="Kaku Y."/>
            <person name="Kodaira H."/>
            <person name="Kondo H."/>
            <person name="Sugawara M."/>
            <person name="Takahashi M."/>
            <person name="Kanda K."/>
            <person name="Yokoi T."/>
            <person name="Furuya T."/>
            <person name="Kikkawa E."/>
            <person name="Omura Y."/>
            <person name="Abe K."/>
            <person name="Kamihara K."/>
            <person name="Katsuta N."/>
            <person name="Sato K."/>
            <person name="Tanikawa M."/>
            <person name="Yamazaki M."/>
            <person name="Ninomiya K."/>
            <person name="Ishibashi T."/>
            <person name="Yamashita H."/>
            <person name="Murakawa K."/>
            <person name="Fujimori K."/>
            <person name="Tanai H."/>
            <person name="Kimata M."/>
            <person name="Watanabe M."/>
            <person name="Hiraoka S."/>
            <person name="Chiba Y."/>
            <person name="Ishida S."/>
            <person name="Ono Y."/>
            <person name="Takiguchi S."/>
            <person name="Watanabe S."/>
            <person name="Yosida M."/>
            <person name="Hotuta T."/>
            <person name="Kusano J."/>
            <person name="Kanehori K."/>
            <person name="Takahashi-Fujii A."/>
            <person name="Hara H."/>
            <person name="Tanase T.-O."/>
            <person name="Nomura Y."/>
            <person name="Togiya S."/>
            <person name="Komai F."/>
            <person name="Hara R."/>
            <person name="Takeuchi K."/>
            <person name="Arita M."/>
            <person name="Imose N."/>
            <person name="Musashino K."/>
            <person name="Yuuki H."/>
            <person name="Oshima A."/>
            <person name="Sasaki N."/>
            <person name="Aotsuka S."/>
            <person name="Yoshikawa Y."/>
            <person name="Matsunawa H."/>
            <person name="Ichihara T."/>
            <person name="Shiohata N."/>
            <person name="Sano S."/>
            <person name="Moriya S."/>
            <person name="Momiyama H."/>
            <person name="Satoh N."/>
            <person name="Takami S."/>
            <person name="Terashima Y."/>
            <person name="Suzuki O."/>
            <person name="Nakagawa S."/>
            <person name="Senoh A."/>
            <person name="Mizoguchi H."/>
            <person name="Goto Y."/>
            <person name="Shimizu F."/>
            <person name="Wakebe H."/>
            <person name="Hishigaki H."/>
            <person name="Watanabe T."/>
            <person name="Sugiyama A."/>
            <person name="Takemoto M."/>
            <person name="Kawakami B."/>
            <person name="Yamazaki M."/>
            <person name="Watanabe K."/>
            <person name="Kumagai A."/>
            <person name="Itakura S."/>
            <person name="Fukuzumi Y."/>
            <person name="Fujimori Y."/>
            <person name="Komiyama M."/>
            <person name="Tashiro H."/>
            <person name="Tanigami A."/>
            <person name="Fujiwara T."/>
            <person name="Ono T."/>
            <person name="Yamada K."/>
            <person name="Fujii Y."/>
            <person name="Ozaki K."/>
            <person name="Hirao M."/>
            <person name="Ohmori Y."/>
            <person name="Kawabata A."/>
            <person name="Hikiji T."/>
            <person name="Kobatake N."/>
            <person name="Inagaki H."/>
            <person name="Ikema Y."/>
            <person name="Okamoto S."/>
            <person name="Okitani R."/>
            <person name="Kawakami T."/>
            <person name="Noguchi S."/>
            <person name="Itoh T."/>
            <person name="Shigeta K."/>
            <person name="Senba T."/>
            <person name="Matsumura K."/>
            <person name="Nakajima Y."/>
            <person name="Mizuno T."/>
            <person name="Morinaga M."/>
            <person name="Sasaki M."/>
            <person name="Togashi T."/>
            <person name="Oyama M."/>
            <person name="Hata H."/>
            <person name="Watanabe M."/>
            <person name="Komatsu T."/>
            <person name="Mizushima-Sugano J."/>
            <person name="Satoh T."/>
            <person name="Shirai Y."/>
            <person name="Takahashi Y."/>
            <person name="Nakagawa K."/>
            <person name="Okumura K."/>
            <person name="Nagase T."/>
            <person name="Nomura N."/>
            <person name="Kikuchi H."/>
            <person name="Masuho Y."/>
            <person name="Yamashita R."/>
            <person name="Nakai K."/>
            <person name="Yada T."/>
            <person name="Nakamura Y."/>
            <person name="Ohara O."/>
            <person name="Isogai T."/>
            <person name="Sugano S."/>
        </authorList>
    </citation>
    <scope>NUCLEOTIDE SEQUENCE [LARGE SCALE MRNA]</scope>
    <source>
        <tissue>Cerebellum</tissue>
    </source>
</reference>
<reference key="2">
    <citation type="submission" date="2003-01" db="EMBL/GenBank/DDBJ databases">
        <title>Full-length sequencing of some human and murine muscular transcripts (Telethon Italy project B41).</title>
        <authorList>
            <person name="Frigimelica E."/>
            <person name="Lanfranchi G."/>
        </authorList>
    </citation>
    <scope>NUCLEOTIDE SEQUENCE [MRNA]</scope>
    <source>
        <tissue>Skeletal muscle</tissue>
    </source>
</reference>
<reference key="3">
    <citation type="journal article" date="2001" name="Nature">
        <title>The DNA sequence and comparative analysis of human chromosome 20.</title>
        <authorList>
            <person name="Deloukas P."/>
            <person name="Matthews L.H."/>
            <person name="Ashurst J.L."/>
            <person name="Burton J."/>
            <person name="Gilbert J.G.R."/>
            <person name="Jones M."/>
            <person name="Stavrides G."/>
            <person name="Almeida J.P."/>
            <person name="Babbage A.K."/>
            <person name="Bagguley C.L."/>
            <person name="Bailey J."/>
            <person name="Barlow K.F."/>
            <person name="Bates K.N."/>
            <person name="Beard L.M."/>
            <person name="Beare D.M."/>
            <person name="Beasley O.P."/>
            <person name="Bird C.P."/>
            <person name="Blakey S.E."/>
            <person name="Bridgeman A.M."/>
            <person name="Brown A.J."/>
            <person name="Buck D."/>
            <person name="Burrill W.D."/>
            <person name="Butler A.P."/>
            <person name="Carder C."/>
            <person name="Carter N.P."/>
            <person name="Chapman J.C."/>
            <person name="Clamp M."/>
            <person name="Clark G."/>
            <person name="Clark L.N."/>
            <person name="Clark S.Y."/>
            <person name="Clee C.M."/>
            <person name="Clegg S."/>
            <person name="Cobley V.E."/>
            <person name="Collier R.E."/>
            <person name="Connor R.E."/>
            <person name="Corby N.R."/>
            <person name="Coulson A."/>
            <person name="Coville G.J."/>
            <person name="Deadman R."/>
            <person name="Dhami P.D."/>
            <person name="Dunn M."/>
            <person name="Ellington A.G."/>
            <person name="Frankland J.A."/>
            <person name="Fraser A."/>
            <person name="French L."/>
            <person name="Garner P."/>
            <person name="Grafham D.V."/>
            <person name="Griffiths C."/>
            <person name="Griffiths M.N.D."/>
            <person name="Gwilliam R."/>
            <person name="Hall R.E."/>
            <person name="Hammond S."/>
            <person name="Harley J.L."/>
            <person name="Heath P.D."/>
            <person name="Ho S."/>
            <person name="Holden J.L."/>
            <person name="Howden P.J."/>
            <person name="Huckle E."/>
            <person name="Hunt A.R."/>
            <person name="Hunt S.E."/>
            <person name="Jekosch K."/>
            <person name="Johnson C.M."/>
            <person name="Johnson D."/>
            <person name="Kay M.P."/>
            <person name="Kimberley A.M."/>
            <person name="King A."/>
            <person name="Knights A."/>
            <person name="Laird G.K."/>
            <person name="Lawlor S."/>
            <person name="Lehvaeslaiho M.H."/>
            <person name="Leversha M.A."/>
            <person name="Lloyd C."/>
            <person name="Lloyd D.M."/>
            <person name="Lovell J.D."/>
            <person name="Marsh V.L."/>
            <person name="Martin S.L."/>
            <person name="McConnachie L.J."/>
            <person name="McLay K."/>
            <person name="McMurray A.A."/>
            <person name="Milne S.A."/>
            <person name="Mistry D."/>
            <person name="Moore M.J.F."/>
            <person name="Mullikin J.C."/>
            <person name="Nickerson T."/>
            <person name="Oliver K."/>
            <person name="Parker A."/>
            <person name="Patel R."/>
            <person name="Pearce T.A.V."/>
            <person name="Peck A.I."/>
            <person name="Phillimore B.J.C.T."/>
            <person name="Prathalingam S.R."/>
            <person name="Plumb R.W."/>
            <person name="Ramsay H."/>
            <person name="Rice C.M."/>
            <person name="Ross M.T."/>
            <person name="Scott C.E."/>
            <person name="Sehra H.K."/>
            <person name="Shownkeen R."/>
            <person name="Sims S."/>
            <person name="Skuce C.D."/>
            <person name="Smith M.L."/>
            <person name="Soderlund C."/>
            <person name="Steward C.A."/>
            <person name="Sulston J.E."/>
            <person name="Swann R.M."/>
            <person name="Sycamore N."/>
            <person name="Taylor R."/>
            <person name="Tee L."/>
            <person name="Thomas D.W."/>
            <person name="Thorpe A."/>
            <person name="Tracey A."/>
            <person name="Tromans A.C."/>
            <person name="Vaudin M."/>
            <person name="Wall M."/>
            <person name="Wallis J.M."/>
            <person name="Whitehead S.L."/>
            <person name="Whittaker P."/>
            <person name="Willey D.L."/>
            <person name="Williams L."/>
            <person name="Williams S.A."/>
            <person name="Wilming L."/>
            <person name="Wray P.W."/>
            <person name="Hubbard T."/>
            <person name="Durbin R.M."/>
            <person name="Bentley D.R."/>
            <person name="Beck S."/>
            <person name="Rogers J."/>
        </authorList>
    </citation>
    <scope>NUCLEOTIDE SEQUENCE [LARGE SCALE GENOMIC DNA]</scope>
</reference>
<reference key="4">
    <citation type="journal article" date="2004" name="Genome Res.">
        <title>The status, quality, and expansion of the NIH full-length cDNA project: the Mammalian Gene Collection (MGC).</title>
        <authorList>
            <consortium name="The MGC Project Team"/>
        </authorList>
    </citation>
    <scope>NUCLEOTIDE SEQUENCE [LARGE SCALE MRNA]</scope>
    <source>
        <tissue>Brain</tissue>
    </source>
</reference>
<reference key="5">
    <citation type="journal article" date="2004" name="Dev. Cell">
        <title>Ozz-E3, a muscle-specific ubiquitin ligase, regulates beta-catenin degradation during myogenesis.</title>
        <authorList>
            <person name="Nastasi T."/>
            <person name="Bongiovanni A."/>
            <person name="Campos Y."/>
            <person name="Mann L."/>
            <person name="Toy J.N."/>
            <person name="Bostrom J."/>
            <person name="Rottier R."/>
            <person name="Hahn C."/>
            <person name="Conaway J.W."/>
            <person name="Harris A.J."/>
            <person name="D'Azzo A."/>
        </authorList>
    </citation>
    <scope>TISSUE SPECIFICITY</scope>
</reference>
<protein>
    <recommendedName>
        <fullName>Neuralized-like protein 2</fullName>
    </recommendedName>
</protein>
<accession>Q9BR09</accession>
<accession>Q3KR34</accession>
<proteinExistence type="evidence at protein level"/>
<feature type="chain" id="PRO_0000181257" description="Neuralized-like protein 2">
    <location>
        <begin position="1"/>
        <end position="285"/>
    </location>
</feature>
<feature type="domain" description="NHR" evidence="3">
    <location>
        <begin position="23"/>
        <end position="244"/>
    </location>
</feature>
<feature type="domain" description="SOCS box" evidence="2">
    <location>
        <begin position="250"/>
        <end position="285"/>
    </location>
</feature>
<feature type="region of interest" description="Disordered" evidence="4">
    <location>
        <begin position="1"/>
        <end position="20"/>
    </location>
</feature>
<feature type="sequence variant" id="VAR_052033" description="In dbSNP:rs35342327.">
    <original>E</original>
    <variation>K</variation>
    <location>
        <position position="211"/>
    </location>
</feature>
<name>NEUL2_HUMAN</name>
<keyword id="KW-0963">Cytoplasm</keyword>
<keyword id="KW-1267">Proteomics identification</keyword>
<keyword id="KW-1185">Reference proteome</keyword>
<keyword id="KW-0833">Ubl conjugation pathway</keyword>